<accession>Q0AXC2</accession>
<gene>
    <name evidence="1" type="primary">plsY</name>
    <name type="ordered locus">Swol_1324</name>
</gene>
<keyword id="KW-1003">Cell membrane</keyword>
<keyword id="KW-0444">Lipid biosynthesis</keyword>
<keyword id="KW-0443">Lipid metabolism</keyword>
<keyword id="KW-0472">Membrane</keyword>
<keyword id="KW-0594">Phospholipid biosynthesis</keyword>
<keyword id="KW-1208">Phospholipid metabolism</keyword>
<keyword id="KW-1185">Reference proteome</keyword>
<keyword id="KW-0808">Transferase</keyword>
<keyword id="KW-0812">Transmembrane</keyword>
<keyword id="KW-1133">Transmembrane helix</keyword>
<proteinExistence type="inferred from homology"/>
<comment type="function">
    <text evidence="1">Catalyzes the transfer of an acyl group from acyl-phosphate (acyl-PO(4)) to glycerol-3-phosphate (G3P) to form lysophosphatidic acid (LPA). This enzyme utilizes acyl-phosphate as fatty acyl donor, but not acyl-CoA or acyl-ACP.</text>
</comment>
<comment type="catalytic activity">
    <reaction evidence="1">
        <text>an acyl phosphate + sn-glycerol 3-phosphate = a 1-acyl-sn-glycero-3-phosphate + phosphate</text>
        <dbReference type="Rhea" id="RHEA:34075"/>
        <dbReference type="ChEBI" id="CHEBI:43474"/>
        <dbReference type="ChEBI" id="CHEBI:57597"/>
        <dbReference type="ChEBI" id="CHEBI:57970"/>
        <dbReference type="ChEBI" id="CHEBI:59918"/>
        <dbReference type="EC" id="2.3.1.275"/>
    </reaction>
</comment>
<comment type="pathway">
    <text evidence="1">Lipid metabolism; phospholipid metabolism.</text>
</comment>
<comment type="subunit">
    <text evidence="1">Probably interacts with PlsX.</text>
</comment>
<comment type="subcellular location">
    <subcellularLocation>
        <location evidence="1">Cell membrane</location>
        <topology evidence="1">Multi-pass membrane protein</topology>
    </subcellularLocation>
</comment>
<comment type="similarity">
    <text evidence="1">Belongs to the PlsY family.</text>
</comment>
<organism>
    <name type="scientific">Syntrophomonas wolfei subsp. wolfei (strain DSM 2245B / Goettingen)</name>
    <dbReference type="NCBI Taxonomy" id="335541"/>
    <lineage>
        <taxon>Bacteria</taxon>
        <taxon>Bacillati</taxon>
        <taxon>Bacillota</taxon>
        <taxon>Clostridia</taxon>
        <taxon>Eubacteriales</taxon>
        <taxon>Syntrophomonadaceae</taxon>
        <taxon>Syntrophomonas</taxon>
    </lineage>
</organism>
<dbReference type="EC" id="2.3.1.275" evidence="1"/>
<dbReference type="EMBL" id="CP000448">
    <property type="protein sequence ID" value="ABI68632.1"/>
    <property type="molecule type" value="Genomic_DNA"/>
</dbReference>
<dbReference type="RefSeq" id="WP_011640732.1">
    <property type="nucleotide sequence ID" value="NC_008346.1"/>
</dbReference>
<dbReference type="SMR" id="Q0AXC2"/>
<dbReference type="STRING" id="335541.Swol_1324"/>
<dbReference type="KEGG" id="swo:Swol_1324"/>
<dbReference type="eggNOG" id="COG0344">
    <property type="taxonomic scope" value="Bacteria"/>
</dbReference>
<dbReference type="HOGENOM" id="CLU_081254_7_1_9"/>
<dbReference type="OrthoDB" id="9777124at2"/>
<dbReference type="UniPathway" id="UPA00085"/>
<dbReference type="Proteomes" id="UP000001968">
    <property type="component" value="Chromosome"/>
</dbReference>
<dbReference type="GO" id="GO:0005886">
    <property type="term" value="C:plasma membrane"/>
    <property type="evidence" value="ECO:0007669"/>
    <property type="project" value="UniProtKB-SubCell"/>
</dbReference>
<dbReference type="GO" id="GO:0043772">
    <property type="term" value="F:acyl-phosphate glycerol-3-phosphate acyltransferase activity"/>
    <property type="evidence" value="ECO:0007669"/>
    <property type="project" value="UniProtKB-UniRule"/>
</dbReference>
<dbReference type="GO" id="GO:0008654">
    <property type="term" value="P:phospholipid biosynthetic process"/>
    <property type="evidence" value="ECO:0007669"/>
    <property type="project" value="UniProtKB-UniRule"/>
</dbReference>
<dbReference type="HAMAP" id="MF_01043">
    <property type="entry name" value="PlsY"/>
    <property type="match status" value="1"/>
</dbReference>
<dbReference type="InterPro" id="IPR003811">
    <property type="entry name" value="G3P_acylTferase_PlsY"/>
</dbReference>
<dbReference type="NCBIfam" id="TIGR00023">
    <property type="entry name" value="glycerol-3-phosphate 1-O-acyltransferase PlsY"/>
    <property type="match status" value="1"/>
</dbReference>
<dbReference type="PANTHER" id="PTHR30309:SF0">
    <property type="entry name" value="GLYCEROL-3-PHOSPHATE ACYLTRANSFERASE-RELATED"/>
    <property type="match status" value="1"/>
</dbReference>
<dbReference type="PANTHER" id="PTHR30309">
    <property type="entry name" value="INNER MEMBRANE PROTEIN YGIH"/>
    <property type="match status" value="1"/>
</dbReference>
<dbReference type="Pfam" id="PF02660">
    <property type="entry name" value="G3P_acyltransf"/>
    <property type="match status" value="1"/>
</dbReference>
<dbReference type="SMART" id="SM01207">
    <property type="entry name" value="G3P_acyltransf"/>
    <property type="match status" value="1"/>
</dbReference>
<name>PLSY_SYNWW</name>
<protein>
    <recommendedName>
        <fullName evidence="1">Glycerol-3-phosphate acyltransferase</fullName>
    </recommendedName>
    <alternativeName>
        <fullName evidence="1">Acyl-PO4 G3P acyltransferase</fullName>
    </alternativeName>
    <alternativeName>
        <fullName evidence="1">Acyl-phosphate--glycerol-3-phosphate acyltransferase</fullName>
    </alternativeName>
    <alternativeName>
        <fullName evidence="1">G3P acyltransferase</fullName>
        <shortName evidence="1">GPAT</shortName>
        <ecNumber evidence="1">2.3.1.275</ecNumber>
    </alternativeName>
    <alternativeName>
        <fullName evidence="1">Lysophosphatidic acid synthase</fullName>
        <shortName evidence="1">LPA synthase</shortName>
    </alternativeName>
</protein>
<reference key="1">
    <citation type="journal article" date="2010" name="Environ. Microbiol.">
        <title>The genome of Syntrophomonas wolfei: new insights into syntrophic metabolism and biohydrogen production.</title>
        <authorList>
            <person name="Sieber J.R."/>
            <person name="Sims D.R."/>
            <person name="Han C."/>
            <person name="Kim E."/>
            <person name="Lykidis A."/>
            <person name="Lapidus A.L."/>
            <person name="McDonnald E."/>
            <person name="Rohlin L."/>
            <person name="Culley D.E."/>
            <person name="Gunsalus R."/>
            <person name="McInerney M.J."/>
        </authorList>
    </citation>
    <scope>NUCLEOTIDE SEQUENCE [LARGE SCALE GENOMIC DNA]</scope>
    <source>
        <strain>DSM 2245B / Goettingen</strain>
    </source>
</reference>
<feature type="chain" id="PRO_1000084401" description="Glycerol-3-phosphate acyltransferase">
    <location>
        <begin position="1"/>
        <end position="195"/>
    </location>
</feature>
<feature type="transmembrane region" description="Helical" evidence="1">
    <location>
        <begin position="3"/>
        <end position="23"/>
    </location>
</feature>
<feature type="transmembrane region" description="Helical" evidence="1">
    <location>
        <begin position="51"/>
        <end position="71"/>
    </location>
</feature>
<feature type="transmembrane region" description="Helical" evidence="1">
    <location>
        <begin position="79"/>
        <end position="99"/>
    </location>
</feature>
<feature type="transmembrane region" description="Helical" evidence="1">
    <location>
        <begin position="111"/>
        <end position="131"/>
    </location>
</feature>
<feature type="transmembrane region" description="Helical" evidence="1">
    <location>
        <begin position="153"/>
        <end position="173"/>
    </location>
</feature>
<evidence type="ECO:0000255" key="1">
    <source>
        <dbReference type="HAMAP-Rule" id="MF_01043"/>
    </source>
</evidence>
<sequence length="195" mass="21020">MQEAALLVLCYLLGSIPFSYFFTRMLTRQDIRKRGSGNVGATNVFRTSGPGVALLAFLGDLLKGLLAAWIGQSTGSQLLLVICVILAVIGHIYPVFLGFKGGKGVTTSAGIILFLMPDVTGILLLIFLAIVYFTRYVSLGSITVACLLPLVSLAMGKPWSYVVIGILMAALVVYHHRENIDRLRNGSEAKITDKA</sequence>